<dbReference type="EMBL" id="AP008226">
    <property type="protein sequence ID" value="BAD70069.1"/>
    <property type="molecule type" value="Genomic_DNA"/>
</dbReference>
<dbReference type="RefSeq" id="WP_011227804.1">
    <property type="nucleotide sequence ID" value="NC_006461.1"/>
</dbReference>
<dbReference type="RefSeq" id="YP_143512.1">
    <property type="nucleotide sequence ID" value="NC_006461.1"/>
</dbReference>
<dbReference type="PDB" id="1ML5">
    <property type="method" value="EM"/>
    <property type="resolution" value="14.00 A"/>
    <property type="chains" value="c=2-229"/>
</dbReference>
<dbReference type="PDB" id="2OM7">
    <property type="method" value="EM"/>
    <property type="resolution" value="7.30 A"/>
    <property type="chains" value="K=1-229"/>
</dbReference>
<dbReference type="PDB" id="3TG8">
    <property type="method" value="X-ray"/>
    <property type="resolution" value="1.95 A"/>
    <property type="chains" value="A=1-229"/>
</dbReference>
<dbReference type="PDB" id="4V42">
    <property type="method" value="X-ray"/>
    <property type="resolution" value="5.50 A"/>
    <property type="chains" value="BC=2-229"/>
</dbReference>
<dbReference type="PDB" id="4V4P">
    <property type="method" value="X-ray"/>
    <property type="resolution" value="5.50 A"/>
    <property type="chains" value="AC=2-229"/>
</dbReference>
<dbReference type="PDB" id="4V4X">
    <property type="method" value="X-ray"/>
    <property type="resolution" value="5.00 A"/>
    <property type="chains" value="BC=1-229"/>
</dbReference>
<dbReference type="PDB" id="4V4Y">
    <property type="method" value="X-ray"/>
    <property type="resolution" value="5.50 A"/>
    <property type="chains" value="BC=1-229"/>
</dbReference>
<dbReference type="PDB" id="4V4Z">
    <property type="method" value="X-ray"/>
    <property type="resolution" value="4.51 A"/>
    <property type="chains" value="BC=1-229"/>
</dbReference>
<dbReference type="PDB" id="4V51">
    <property type="method" value="X-ray"/>
    <property type="resolution" value="2.80 A"/>
    <property type="chains" value="BC/DC=2-229"/>
</dbReference>
<dbReference type="PDB" id="4V5A">
    <property type="method" value="X-ray"/>
    <property type="resolution" value="3.50 A"/>
    <property type="chains" value="BC/DC=2-229"/>
</dbReference>
<dbReference type="PDB" id="4V5C">
    <property type="method" value="X-ray"/>
    <property type="resolution" value="3.30 A"/>
    <property type="chains" value="BC/DC=1-229"/>
</dbReference>
<dbReference type="PDB" id="4V5D">
    <property type="method" value="X-ray"/>
    <property type="resolution" value="3.50 A"/>
    <property type="chains" value="BC/DC=1-229"/>
</dbReference>
<dbReference type="PDB" id="4V5E">
    <property type="method" value="X-ray"/>
    <property type="resolution" value="3.45 A"/>
    <property type="chains" value="BC/DC=1-229"/>
</dbReference>
<dbReference type="PDB" id="4V5F">
    <property type="method" value="X-ray"/>
    <property type="resolution" value="3.60 A"/>
    <property type="chains" value="BC/DC=1-229"/>
</dbReference>
<dbReference type="PDB" id="4V5G">
    <property type="method" value="X-ray"/>
    <property type="resolution" value="3.60 A"/>
    <property type="chains" value="BC/DC=1-229"/>
</dbReference>
<dbReference type="PDB" id="4V5J">
    <property type="method" value="X-ray"/>
    <property type="resolution" value="3.10 A"/>
    <property type="chains" value="BC/DC=1-229"/>
</dbReference>
<dbReference type="PDB" id="4V5K">
    <property type="method" value="X-ray"/>
    <property type="resolution" value="3.20 A"/>
    <property type="chains" value="BC/DC=1-229"/>
</dbReference>
<dbReference type="PDB" id="4V5L">
    <property type="method" value="X-ray"/>
    <property type="resolution" value="3.10 A"/>
    <property type="chains" value="BC=1-229"/>
</dbReference>
<dbReference type="PDB" id="4V5M">
    <property type="method" value="EM"/>
    <property type="resolution" value="7.80 A"/>
    <property type="chains" value="BC=1-229"/>
</dbReference>
<dbReference type="PDB" id="4V5N">
    <property type="method" value="EM"/>
    <property type="resolution" value="7.60 A"/>
    <property type="chains" value="BC=1-229"/>
</dbReference>
<dbReference type="PDB" id="4V5P">
    <property type="method" value="X-ray"/>
    <property type="resolution" value="3.10 A"/>
    <property type="chains" value="BC/DC=1-229"/>
</dbReference>
<dbReference type="PDB" id="4V5Q">
    <property type="method" value="X-ray"/>
    <property type="resolution" value="3.10 A"/>
    <property type="chains" value="BC/DC=1-229"/>
</dbReference>
<dbReference type="PDB" id="4V5R">
    <property type="method" value="X-ray"/>
    <property type="resolution" value="3.10 A"/>
    <property type="chains" value="BC/DC=1-229"/>
</dbReference>
<dbReference type="PDB" id="4V5S">
    <property type="method" value="X-ray"/>
    <property type="resolution" value="3.10 A"/>
    <property type="chains" value="BC/DC=1-229"/>
</dbReference>
<dbReference type="PDB" id="4V68">
    <property type="method" value="EM"/>
    <property type="resolution" value="6.40 A"/>
    <property type="chains" value="BC=19-225"/>
</dbReference>
<dbReference type="PDB" id="4V6A">
    <property type="method" value="X-ray"/>
    <property type="resolution" value="3.10 A"/>
    <property type="chains" value="BC/DC=1-229"/>
</dbReference>
<dbReference type="PDB" id="4V7J">
    <property type="method" value="X-ray"/>
    <property type="resolution" value="3.30 A"/>
    <property type="chains" value="AC/BC=1-229"/>
</dbReference>
<dbReference type="PDB" id="4V7K">
    <property type="method" value="X-ray"/>
    <property type="resolution" value="3.60 A"/>
    <property type="chains" value="AC/BC=1-229"/>
</dbReference>
<dbReference type="PDB" id="4V7L">
    <property type="method" value="X-ray"/>
    <property type="resolution" value="3.00 A"/>
    <property type="chains" value="BC/DC=1-229"/>
</dbReference>
<dbReference type="PDB" id="4V7M">
    <property type="method" value="X-ray"/>
    <property type="resolution" value="3.45 A"/>
    <property type="chains" value="BC/DC=1-229"/>
</dbReference>
<dbReference type="PDB" id="4V8J">
    <property type="method" value="X-ray"/>
    <property type="resolution" value="3.90 A"/>
    <property type="chains" value="BC/DC=1-229"/>
</dbReference>
<dbReference type="PDB" id="4V8N">
    <property type="method" value="X-ray"/>
    <property type="resolution" value="3.10 A"/>
    <property type="chains" value="BC/DC=1-229"/>
</dbReference>
<dbReference type="PDB" id="4V8O">
    <property type="method" value="X-ray"/>
    <property type="resolution" value="3.80 A"/>
    <property type="chains" value="BC=1-229"/>
</dbReference>
<dbReference type="PDB" id="4V8Q">
    <property type="method" value="X-ray"/>
    <property type="resolution" value="3.10 A"/>
    <property type="chains" value="AC=1-229"/>
</dbReference>
<dbReference type="PDB" id="4V8U">
    <property type="method" value="X-ray"/>
    <property type="resolution" value="3.70 A"/>
    <property type="chains" value="BC/DC=1-229"/>
</dbReference>
<dbReference type="PDB" id="4V8X">
    <property type="method" value="X-ray"/>
    <property type="resolution" value="3.35 A"/>
    <property type="chains" value="BC/DC=1-229"/>
</dbReference>
<dbReference type="PDB" id="4V90">
    <property type="method" value="X-ray"/>
    <property type="resolution" value="2.95 A"/>
    <property type="chains" value="BC=2-229"/>
</dbReference>
<dbReference type="PDB" id="4V97">
    <property type="method" value="X-ray"/>
    <property type="resolution" value="3.52 A"/>
    <property type="chains" value="BC/DC=1-229"/>
</dbReference>
<dbReference type="PDB" id="4V9H">
    <property type="method" value="X-ray"/>
    <property type="resolution" value="2.86 A"/>
    <property type="chains" value="BC=1-229"/>
</dbReference>
<dbReference type="PDB" id="4WF1">
    <property type="method" value="X-ray"/>
    <property type="resolution" value="3.09 A"/>
    <property type="chains" value="B5=19-225"/>
</dbReference>
<dbReference type="PDB" id="4WPO">
    <property type="method" value="X-ray"/>
    <property type="resolution" value="2.80 A"/>
    <property type="chains" value="AC/CC=2-229"/>
</dbReference>
<dbReference type="PDB" id="4WQF">
    <property type="method" value="X-ray"/>
    <property type="resolution" value="2.80 A"/>
    <property type="chains" value="AC/CC=2-229"/>
</dbReference>
<dbReference type="PDB" id="4WQU">
    <property type="method" value="X-ray"/>
    <property type="resolution" value="2.80 A"/>
    <property type="chains" value="AC/CC=2-229"/>
</dbReference>
<dbReference type="PDB" id="4WQY">
    <property type="method" value="X-ray"/>
    <property type="resolution" value="2.80 A"/>
    <property type="chains" value="AC/CC=2-229"/>
</dbReference>
<dbReference type="PDB" id="4WT8">
    <property type="method" value="X-ray"/>
    <property type="resolution" value="3.40 A"/>
    <property type="chains" value="CA/DA=19-111"/>
</dbReference>
<dbReference type="PDB" id="4WU1">
    <property type="method" value="X-ray"/>
    <property type="resolution" value="3.20 A"/>
    <property type="chains" value="71/79=1-229"/>
</dbReference>
<dbReference type="PDB" id="4WZD">
    <property type="method" value="X-ray"/>
    <property type="resolution" value="3.10 A"/>
    <property type="chains" value="71/79=1-229"/>
</dbReference>
<dbReference type="PDB" id="4WZO">
    <property type="method" value="X-ray"/>
    <property type="resolution" value="3.30 A"/>
    <property type="chains" value="71=1-229"/>
</dbReference>
<dbReference type="PDB" id="5A9Z">
    <property type="method" value="EM"/>
    <property type="resolution" value="4.70 A"/>
    <property type="chains" value="AC=2-229"/>
</dbReference>
<dbReference type="PDB" id="5AA0">
    <property type="method" value="EM"/>
    <property type="resolution" value="5.00 A"/>
    <property type="chains" value="AC=2-229"/>
</dbReference>
<dbReference type="PDB" id="5E7K">
    <property type="method" value="X-ray"/>
    <property type="resolution" value="3.20 A"/>
    <property type="chains" value="71/79=1-229"/>
</dbReference>
<dbReference type="PDB" id="5E81">
    <property type="method" value="X-ray"/>
    <property type="resolution" value="2.95 A"/>
    <property type="chains" value="71/79=1-229"/>
</dbReference>
<dbReference type="PDB" id="5EL4">
    <property type="method" value="X-ray"/>
    <property type="resolution" value="3.15 A"/>
    <property type="chains" value="71=1-229"/>
</dbReference>
<dbReference type="PDB" id="5EL5">
    <property type="method" value="X-ray"/>
    <property type="resolution" value="3.15 A"/>
    <property type="chains" value="71=1-229"/>
</dbReference>
<dbReference type="PDB" id="5EL6">
    <property type="method" value="X-ray"/>
    <property type="resolution" value="3.10 A"/>
    <property type="chains" value="71/79=1-229"/>
</dbReference>
<dbReference type="PDB" id="5EL7">
    <property type="method" value="X-ray"/>
    <property type="resolution" value="3.15 A"/>
    <property type="chains" value="71/79=1-229"/>
</dbReference>
<dbReference type="PDB" id="5HAU">
    <property type="method" value="X-ray"/>
    <property type="resolution" value="3.00 A"/>
    <property type="chains" value="1C/2C=1-229"/>
</dbReference>
<dbReference type="PDB" id="5NPM">
    <property type="method" value="X-ray"/>
    <property type="resolution" value="2.70 A"/>
    <property type="chains" value="A=10-229"/>
</dbReference>
<dbReference type="PDB" id="5OT7">
    <property type="method" value="EM"/>
    <property type="resolution" value="3.80 A"/>
    <property type="chains" value="f=3-229"/>
</dbReference>
<dbReference type="PDB" id="5UQ7">
    <property type="method" value="EM"/>
    <property type="resolution" value="3.50 A"/>
    <property type="chains" value="C=3-229"/>
</dbReference>
<dbReference type="PDB" id="5UQ8">
    <property type="method" value="EM"/>
    <property type="resolution" value="3.20 A"/>
    <property type="chains" value="C=3-229"/>
</dbReference>
<dbReference type="PDB" id="5ZLU">
    <property type="method" value="EM"/>
    <property type="resolution" value="3.60 A"/>
    <property type="chains" value="Y=1-229"/>
</dbReference>
<dbReference type="PDB" id="6C5L">
    <property type="method" value="X-ray"/>
    <property type="resolution" value="3.20 A"/>
    <property type="chains" value="BC/DC=1-229"/>
</dbReference>
<dbReference type="PDB" id="6GSL">
    <property type="method" value="X-ray"/>
    <property type="resolution" value="3.16 A"/>
    <property type="chains" value="71/79=1-229"/>
</dbReference>
<dbReference type="PDB" id="6Q95">
    <property type="method" value="EM"/>
    <property type="resolution" value="3.70 A"/>
    <property type="chains" value="A=1-229"/>
</dbReference>
<dbReference type="PDB" id="6QNQ">
    <property type="method" value="X-ray"/>
    <property type="resolution" value="3.50 A"/>
    <property type="chains" value="71=1-229"/>
</dbReference>
<dbReference type="PDB" id="6QNR">
    <property type="method" value="X-ray"/>
    <property type="resolution" value="3.10 A"/>
    <property type="chains" value="71/79=1-229"/>
</dbReference>
<dbReference type="PDB" id="7LH5">
    <property type="method" value="X-ray"/>
    <property type="resolution" value="3.27 A"/>
    <property type="chains" value="BC/DC=1-229"/>
</dbReference>
<dbReference type="PDBsum" id="1ML5"/>
<dbReference type="PDBsum" id="2OM7"/>
<dbReference type="PDBsum" id="3TG8"/>
<dbReference type="PDBsum" id="4V42"/>
<dbReference type="PDBsum" id="4V4P"/>
<dbReference type="PDBsum" id="4V4X"/>
<dbReference type="PDBsum" id="4V4Y"/>
<dbReference type="PDBsum" id="4V4Z"/>
<dbReference type="PDBsum" id="4V51"/>
<dbReference type="PDBsum" id="4V5A"/>
<dbReference type="PDBsum" id="4V5C"/>
<dbReference type="PDBsum" id="4V5D"/>
<dbReference type="PDBsum" id="4V5E"/>
<dbReference type="PDBsum" id="4V5F"/>
<dbReference type="PDBsum" id="4V5G"/>
<dbReference type="PDBsum" id="4V5J"/>
<dbReference type="PDBsum" id="4V5K"/>
<dbReference type="PDBsum" id="4V5L"/>
<dbReference type="PDBsum" id="4V5M"/>
<dbReference type="PDBsum" id="4V5N"/>
<dbReference type="PDBsum" id="4V5P"/>
<dbReference type="PDBsum" id="4V5Q"/>
<dbReference type="PDBsum" id="4V5R"/>
<dbReference type="PDBsum" id="4V5S"/>
<dbReference type="PDBsum" id="4V68"/>
<dbReference type="PDBsum" id="4V6A"/>
<dbReference type="PDBsum" id="4V7J"/>
<dbReference type="PDBsum" id="4V7K"/>
<dbReference type="PDBsum" id="4V7L"/>
<dbReference type="PDBsum" id="4V7M"/>
<dbReference type="PDBsum" id="4V8J"/>
<dbReference type="PDBsum" id="4V8N"/>
<dbReference type="PDBsum" id="4V8O"/>
<dbReference type="PDBsum" id="4V8Q"/>
<dbReference type="PDBsum" id="4V8U"/>
<dbReference type="PDBsum" id="4V8X"/>
<dbReference type="PDBsum" id="4V90"/>
<dbReference type="PDBsum" id="4V97"/>
<dbReference type="PDBsum" id="4V9H"/>
<dbReference type="PDBsum" id="4WF1"/>
<dbReference type="PDBsum" id="4WPO"/>
<dbReference type="PDBsum" id="4WQF"/>
<dbReference type="PDBsum" id="4WQU"/>
<dbReference type="PDBsum" id="4WQY"/>
<dbReference type="PDBsum" id="4WT8"/>
<dbReference type="PDBsum" id="4WU1"/>
<dbReference type="PDBsum" id="4WZD"/>
<dbReference type="PDBsum" id="4WZO"/>
<dbReference type="PDBsum" id="5A9Z"/>
<dbReference type="PDBsum" id="5AA0"/>
<dbReference type="PDBsum" id="5E7K"/>
<dbReference type="PDBsum" id="5E81"/>
<dbReference type="PDBsum" id="5EL4"/>
<dbReference type="PDBsum" id="5EL5"/>
<dbReference type="PDBsum" id="5EL6"/>
<dbReference type="PDBsum" id="5EL7"/>
<dbReference type="PDBsum" id="5HAU"/>
<dbReference type="PDBsum" id="5NPM"/>
<dbReference type="PDBsum" id="5OT7"/>
<dbReference type="PDBsum" id="5UQ7"/>
<dbReference type="PDBsum" id="5UQ8"/>
<dbReference type="PDBsum" id="5ZLU"/>
<dbReference type="PDBsum" id="6C5L"/>
<dbReference type="PDBsum" id="6GSL"/>
<dbReference type="PDBsum" id="6Q95"/>
<dbReference type="PDBsum" id="6QNQ"/>
<dbReference type="PDBsum" id="6QNR"/>
<dbReference type="PDBsum" id="7LH5"/>
<dbReference type="EMDB" id="EMD-3852"/>
<dbReference type="EMDB" id="EMD-4475"/>
<dbReference type="EMDB" id="EMD-6934"/>
<dbReference type="EMDB" id="EMD-8596"/>
<dbReference type="EMDB" id="EMD-8597"/>
<dbReference type="SMR" id="Q5SLP7"/>
<dbReference type="IntAct" id="Q5SLP7">
    <property type="interactions" value="9"/>
</dbReference>
<dbReference type="EnsemblBacteria" id="BAD70069">
    <property type="protein sequence ID" value="BAD70069"/>
    <property type="gene ID" value="BAD70069"/>
</dbReference>
<dbReference type="GeneID" id="3168861"/>
<dbReference type="KEGG" id="ttj:TTHA0246"/>
<dbReference type="PATRIC" id="fig|300852.9.peg.246"/>
<dbReference type="eggNOG" id="COG0081">
    <property type="taxonomic scope" value="Bacteria"/>
</dbReference>
<dbReference type="HOGENOM" id="CLU_062853_0_0_0"/>
<dbReference type="PhylomeDB" id="Q5SLP7"/>
<dbReference type="EvolutionaryTrace" id="Q5SLP7"/>
<dbReference type="Proteomes" id="UP000000532">
    <property type="component" value="Chromosome"/>
</dbReference>
<dbReference type="GO" id="GO:0015934">
    <property type="term" value="C:large ribosomal subunit"/>
    <property type="evidence" value="ECO:0007669"/>
    <property type="project" value="InterPro"/>
</dbReference>
<dbReference type="GO" id="GO:0019843">
    <property type="term" value="F:rRNA binding"/>
    <property type="evidence" value="ECO:0007669"/>
    <property type="project" value="UniProtKB-UniRule"/>
</dbReference>
<dbReference type="GO" id="GO:0003735">
    <property type="term" value="F:structural constituent of ribosome"/>
    <property type="evidence" value="ECO:0007669"/>
    <property type="project" value="InterPro"/>
</dbReference>
<dbReference type="GO" id="GO:0000049">
    <property type="term" value="F:tRNA binding"/>
    <property type="evidence" value="ECO:0007669"/>
    <property type="project" value="UniProtKB-KW"/>
</dbReference>
<dbReference type="GO" id="GO:0006417">
    <property type="term" value="P:regulation of translation"/>
    <property type="evidence" value="ECO:0007669"/>
    <property type="project" value="UniProtKB-KW"/>
</dbReference>
<dbReference type="GO" id="GO:0006412">
    <property type="term" value="P:translation"/>
    <property type="evidence" value="ECO:0007669"/>
    <property type="project" value="UniProtKB-UniRule"/>
</dbReference>
<dbReference type="CDD" id="cd00403">
    <property type="entry name" value="Ribosomal_L1"/>
    <property type="match status" value="1"/>
</dbReference>
<dbReference type="FunFam" id="3.40.50.790:FF:000001">
    <property type="entry name" value="50S ribosomal protein L1"/>
    <property type="match status" value="1"/>
</dbReference>
<dbReference type="Gene3D" id="3.30.190.20">
    <property type="match status" value="1"/>
</dbReference>
<dbReference type="Gene3D" id="3.40.50.790">
    <property type="match status" value="1"/>
</dbReference>
<dbReference type="HAMAP" id="MF_01318_B">
    <property type="entry name" value="Ribosomal_uL1_B"/>
    <property type="match status" value="1"/>
</dbReference>
<dbReference type="InterPro" id="IPR005878">
    <property type="entry name" value="Ribosom_uL1_bac-type"/>
</dbReference>
<dbReference type="InterPro" id="IPR002143">
    <property type="entry name" value="Ribosomal_uL1"/>
</dbReference>
<dbReference type="InterPro" id="IPR023674">
    <property type="entry name" value="Ribosomal_uL1-like"/>
</dbReference>
<dbReference type="InterPro" id="IPR028364">
    <property type="entry name" value="Ribosomal_uL1/biogenesis"/>
</dbReference>
<dbReference type="InterPro" id="IPR016095">
    <property type="entry name" value="Ribosomal_uL1_3-a/b-sand"/>
</dbReference>
<dbReference type="InterPro" id="IPR023673">
    <property type="entry name" value="Ribosomal_uL1_CS"/>
</dbReference>
<dbReference type="NCBIfam" id="TIGR01169">
    <property type="entry name" value="rplA_bact"/>
    <property type="match status" value="1"/>
</dbReference>
<dbReference type="PANTHER" id="PTHR36427">
    <property type="entry name" value="54S RIBOSOMAL PROTEIN L1, MITOCHONDRIAL"/>
    <property type="match status" value="1"/>
</dbReference>
<dbReference type="PANTHER" id="PTHR36427:SF3">
    <property type="entry name" value="LARGE RIBOSOMAL SUBUNIT PROTEIN UL1M"/>
    <property type="match status" value="1"/>
</dbReference>
<dbReference type="Pfam" id="PF00687">
    <property type="entry name" value="Ribosomal_L1"/>
    <property type="match status" value="1"/>
</dbReference>
<dbReference type="PIRSF" id="PIRSF002155">
    <property type="entry name" value="Ribosomal_L1"/>
    <property type="match status" value="1"/>
</dbReference>
<dbReference type="SUPFAM" id="SSF56808">
    <property type="entry name" value="Ribosomal protein L1"/>
    <property type="match status" value="1"/>
</dbReference>
<dbReference type="PROSITE" id="PS01199">
    <property type="entry name" value="RIBOSOMAL_L1"/>
    <property type="match status" value="1"/>
</dbReference>
<reference key="1">
    <citation type="submission" date="2004-11" db="EMBL/GenBank/DDBJ databases">
        <title>Complete genome sequence of Thermus thermophilus HB8.</title>
        <authorList>
            <person name="Masui R."/>
            <person name="Kurokawa K."/>
            <person name="Nakagawa N."/>
            <person name="Tokunaga F."/>
            <person name="Koyama Y."/>
            <person name="Shibata T."/>
            <person name="Oshima T."/>
            <person name="Yokoyama S."/>
            <person name="Yasunaga T."/>
            <person name="Kuramitsu S."/>
        </authorList>
    </citation>
    <scope>NUCLEOTIDE SEQUENCE [LARGE SCALE GENOMIC DNA]</scope>
    <source>
        <strain>ATCC 27634 / DSM 579 / HB8</strain>
    </source>
</reference>
<reference key="2">
    <citation type="journal article" date="2000" name="Biol. Chem.">
        <title>Identification of the 50S ribosomal proteins from the eubacterium Thermus thermophilus.</title>
        <authorList>
            <person name="Katsani K.R."/>
            <person name="Tsiboli P."/>
            <person name="Anagnostopoulos K."/>
            <person name="Urlaub H."/>
            <person name="Choli-Papadopoulou T."/>
        </authorList>
    </citation>
    <scope>PROTEIN SEQUENCE OF 2-26</scope>
    <source>
        <strain>ATCC 27634 / DSM 579 / HB8</strain>
    </source>
</reference>
<reference key="3">
    <citation type="journal article" date="1992" name="J. Bacteriol.">
        <title>Identification of the gene encoding transcription factor NusG of Thermus thermophilus.</title>
        <authorList>
            <person name="Heinrich T."/>
            <person name="Schroeder W."/>
            <person name="Erdmann V.A."/>
            <person name="Hartmann R.K."/>
        </authorList>
    </citation>
    <scope>NUCLEOTIDE SEQUENCE [GENOMIC DNA] OF 94-181</scope>
    <source>
        <strain>ATCC 27634 / DSM 579 / HB8</strain>
    </source>
</reference>
<reference key="4">
    <citation type="journal article" date="2005" name="Proteomics">
        <title>Extending ribosomal protein identifications to unsequenced bacterial strains using matrix-assisted laser desorption/ionization mass spectrometry.</title>
        <authorList>
            <person name="Suh M.-J."/>
            <person name="Hamburg D.M."/>
            <person name="Gregory S.T."/>
            <person name="Dahlberg A.E."/>
            <person name="Limbach P.A."/>
        </authorList>
    </citation>
    <scope>MASS SPECTROMETRY</scope>
    <source>
        <strain>ATCC 27634 / DSM 579 / HB8</strain>
    </source>
</reference>
<reference key="5">
    <citation type="journal article" date="2001" name="Cell">
        <title>The path of messenger RNA through the ribosome.</title>
        <authorList>
            <person name="Yusupova G.Z."/>
            <person name="Yusupov M.M."/>
            <person name="Cate J.H.D."/>
            <person name="Noller H.F."/>
        </authorList>
    </citation>
    <scope>X-RAY CRYSTALLOGRAPHY (5.0 ANGSTROMS) OF THE RIBOSOME</scope>
</reference>
<reference key="6">
    <citation type="journal article" date="2001" name="Science">
        <title>Crystal structure of the ribosome at 5.5 A resolution.</title>
        <authorList>
            <person name="Yusupov M.M."/>
            <person name="Yusupova G.Z."/>
            <person name="Baucom A."/>
            <person name="Lieberman K."/>
            <person name="Earnest T.N."/>
            <person name="Cate J.H.D."/>
            <person name="Noller H.F."/>
        </authorList>
    </citation>
    <scope>X-RAY CRYSTALLOGRAPHY (5.5 ANGSTROMS) OF THE RIBOSOME</scope>
</reference>
<reference key="7">
    <citation type="journal article" date="2008" name="Science">
        <title>Insights into translational termination from the structure of RF2 bound to the ribosome.</title>
        <authorList>
            <person name="Weixlbaumer A."/>
            <person name="Jin H."/>
            <person name="Neubauer C."/>
            <person name="Voorhees R.M."/>
            <person name="Petry S."/>
            <person name="Kelley A.C."/>
            <person name="Ramakrishnan V."/>
        </authorList>
    </citation>
    <scope>X-RAY CRYSTALLOGRAPHY (3.45 ANGSTROMS) OF 70S RIBOSOME IN COMPLEX WITH RF2</scope>
    <scope>SUBUNIT</scope>
</reference>
<reference key="8">
    <citation type="journal article" date="2010" name="Proc. Natl. Acad. Sci. U.S.A.">
        <title>Structure of the 70S ribosome bound to release factor 2 and a substrate analog provides insights into catalysis of peptide release.</title>
        <authorList>
            <person name="Jin H."/>
            <person name="Kelley A.C."/>
            <person name="Loakes D."/>
            <person name="Ramakrishnan V."/>
        </authorList>
    </citation>
    <scope>X-RAY CRYSTALLOGRAPHY (3.10 ANGSTROMS) OF 70S RIBOSOME IN COMPLEX WITH RF2</scope>
    <scope>SUBUNIT</scope>
</reference>
<accession>Q5SLP7</accession>
<gene>
    <name type="primary">rplA</name>
    <name type="ordered locus">TTHA0246</name>
</gene>
<name>RL1_THET8</name>
<keyword id="KW-0002">3D-structure</keyword>
<keyword id="KW-0903">Direct protein sequencing</keyword>
<keyword id="KW-1185">Reference proteome</keyword>
<keyword id="KW-0678">Repressor</keyword>
<keyword id="KW-0687">Ribonucleoprotein</keyword>
<keyword id="KW-0689">Ribosomal protein</keyword>
<keyword id="KW-0694">RNA-binding</keyword>
<keyword id="KW-0699">rRNA-binding</keyword>
<keyword id="KW-0810">Translation regulation</keyword>
<keyword id="KW-0820">tRNA-binding</keyword>
<comment type="function">
    <text>Directly binds to 23S rRNA. Forms what is known as the L1 stalk, which protrudes beyond the 70S ribosome surface. The stalk is preferentially stabilized in 70S versus 50S crystals. Interacts with the E site tRNA, blocking the exit path. This blockage implies that this section of the ribosome must be able to move to release the deacetylated tRNA.</text>
</comment>
<comment type="function">
    <text evidence="1">Protein L1 is also a translational repressor protein, it controls the translation of the L11 operon by binding to its mRNA.</text>
</comment>
<comment type="subunit">
    <text>Part of the 50S ribosomal subunit.</text>
</comment>
<comment type="mass spectrometry" mass="24698.0" method="MALDI" evidence="3"/>
<comment type="similarity">
    <text evidence="4">Belongs to the universal ribosomal protein uL1 family.</text>
</comment>
<proteinExistence type="evidence at protein level"/>
<organism>
    <name type="scientific">Thermus thermophilus (strain ATCC 27634 / DSM 579 / HB8)</name>
    <dbReference type="NCBI Taxonomy" id="300852"/>
    <lineage>
        <taxon>Bacteria</taxon>
        <taxon>Thermotogati</taxon>
        <taxon>Deinococcota</taxon>
        <taxon>Deinococci</taxon>
        <taxon>Thermales</taxon>
        <taxon>Thermaceae</taxon>
        <taxon>Thermus</taxon>
    </lineage>
</organism>
<sequence length="229" mass="24831">MPKHGKRYRALLEKVDPNKVYTIDEAARLVKELATAKFDETVEVHAKLGIDPRRSDQNVRGTVSLPHGLGKQVRVLAIAKGEKIKEAEEAGADYVGGEEIIQKILDGWMDFDAVVATPDVMGAVGSKLGRILGPRGLLPNPKAGTVGFNIGEIIREIKAGRIEFRNDKTGAIHAPVGKASFPPEKLADNIRAFIRALEAHKPEGAKGTFLRSVYVTTTMGPSVRINPHS</sequence>
<evidence type="ECO:0000250" key="1"/>
<evidence type="ECO:0000269" key="2">
    <source>
    </source>
</evidence>
<evidence type="ECO:0000269" key="3">
    <source>
    </source>
</evidence>
<evidence type="ECO:0000305" key="4"/>
<evidence type="ECO:0007829" key="5">
    <source>
        <dbReference type="PDB" id="3TG8"/>
    </source>
</evidence>
<evidence type="ECO:0007829" key="6">
    <source>
        <dbReference type="PDB" id="5NPM"/>
    </source>
</evidence>
<protein>
    <recommendedName>
        <fullName evidence="4">Large ribosomal subunit protein uL1</fullName>
    </recommendedName>
    <alternativeName>
        <fullName>50S ribosomal protein L1</fullName>
    </alternativeName>
</protein>
<feature type="initiator methionine" description="Removed" evidence="2">
    <location>
        <position position="1"/>
    </location>
</feature>
<feature type="chain" id="PRO_0000125764" description="Large ribosomal subunit protein uL1">
    <location>
        <begin position="2"/>
        <end position="229"/>
    </location>
</feature>
<feature type="helix" evidence="5">
    <location>
        <begin position="23"/>
        <end position="32"/>
    </location>
</feature>
<feature type="strand" evidence="5">
    <location>
        <begin position="36"/>
        <end position="38"/>
    </location>
</feature>
<feature type="strand" evidence="5">
    <location>
        <begin position="41"/>
        <end position="50"/>
    </location>
</feature>
<feature type="strand" evidence="6">
    <location>
        <begin position="52"/>
        <end position="54"/>
    </location>
</feature>
<feature type="helix" evidence="5">
    <location>
        <begin position="55"/>
        <end position="57"/>
    </location>
</feature>
<feature type="strand" evidence="5">
    <location>
        <begin position="60"/>
        <end position="64"/>
    </location>
</feature>
<feature type="helix" evidence="5">
    <location>
        <begin position="70"/>
        <end position="72"/>
    </location>
</feature>
<feature type="strand" evidence="5">
    <location>
        <begin position="75"/>
        <end position="78"/>
    </location>
</feature>
<feature type="helix" evidence="5">
    <location>
        <begin position="82"/>
        <end position="89"/>
    </location>
</feature>
<feature type="strand" evidence="5">
    <location>
        <begin position="93"/>
        <end position="96"/>
    </location>
</feature>
<feature type="helix" evidence="5">
    <location>
        <begin position="98"/>
        <end position="100"/>
    </location>
</feature>
<feature type="helix" evidence="5">
    <location>
        <begin position="101"/>
        <end position="105"/>
    </location>
</feature>
<feature type="strand" evidence="5">
    <location>
        <begin position="112"/>
        <end position="116"/>
    </location>
</feature>
<feature type="helix" evidence="5">
    <location>
        <begin position="118"/>
        <end position="120"/>
    </location>
</feature>
<feature type="helix" evidence="5">
    <location>
        <begin position="121"/>
        <end position="132"/>
    </location>
</feature>
<feature type="turn" evidence="5">
    <location>
        <begin position="133"/>
        <end position="136"/>
    </location>
</feature>
<feature type="helix" evidence="5">
    <location>
        <begin position="141"/>
        <end position="143"/>
    </location>
</feature>
<feature type="strand" evidence="5">
    <location>
        <begin position="146"/>
        <end position="148"/>
    </location>
</feature>
<feature type="helix" evidence="5">
    <location>
        <begin position="150"/>
        <end position="157"/>
    </location>
</feature>
<feature type="strand" evidence="5">
    <location>
        <begin position="161"/>
        <end position="165"/>
    </location>
</feature>
<feature type="strand" evidence="5">
    <location>
        <begin position="170"/>
        <end position="178"/>
    </location>
</feature>
<feature type="helix" evidence="5">
    <location>
        <begin position="183"/>
        <end position="199"/>
    </location>
</feature>
<feature type="strand" evidence="5">
    <location>
        <begin position="209"/>
        <end position="217"/>
    </location>
</feature>
<feature type="strand" evidence="5">
    <location>
        <begin position="222"/>
        <end position="225"/>
    </location>
</feature>